<accession>D6XVS2</accession>
<sequence length="268" mass="29683">MFDSIIIGQYVPGDSVVHRLDPRVKLTAVFIFLVFMFMTRDPLLLTVAVLLSFGGLLASRVPLSFYAKGMRFISIIIVLTFVLHLFMTGGGEVIVELPFATIYSGGLIEGFMLAMKLAMIITIASLLTLTTTPIDLTDGMERMLAPFKRVKLPTHELALMMSIALRFIPTLIEETRTIVLAQLARGTNFSEGSLWKRLKALIPILVPLFTQSFKRAEELATAMEARGYAGGEGRTKYRQLHWGLKDSVVLAVFLLFAAAVMAERFMGG</sequence>
<proteinExistence type="inferred from homology"/>
<gene>
    <name evidence="1" type="primary">ecfT</name>
    <name type="ordered locus">Bsel_0146</name>
</gene>
<name>ECFT_BACIE</name>
<feature type="chain" id="PRO_0000408984" description="Energy-coupling factor transporter transmembrane protein EcfT">
    <location>
        <begin position="1"/>
        <end position="268"/>
    </location>
</feature>
<feature type="transmembrane region" description="Helical" evidence="1">
    <location>
        <begin position="29"/>
        <end position="49"/>
    </location>
</feature>
<feature type="transmembrane region" description="Helical" evidence="1">
    <location>
        <begin position="75"/>
        <end position="95"/>
    </location>
</feature>
<feature type="transmembrane region" description="Helical" evidence="1">
    <location>
        <begin position="107"/>
        <end position="127"/>
    </location>
</feature>
<feature type="transmembrane region" description="Helical" evidence="1">
    <location>
        <begin position="152"/>
        <end position="172"/>
    </location>
</feature>
<feature type="transmembrane region" description="Helical" evidence="1">
    <location>
        <begin position="242"/>
        <end position="262"/>
    </location>
</feature>
<dbReference type="EMBL" id="CP001791">
    <property type="protein sequence ID" value="ADH97695.1"/>
    <property type="molecule type" value="Genomic_DNA"/>
</dbReference>
<dbReference type="RefSeq" id="WP_013171124.1">
    <property type="nucleotide sequence ID" value="NC_014219.1"/>
</dbReference>
<dbReference type="SMR" id="D6XVS2"/>
<dbReference type="STRING" id="439292.Bsel_0146"/>
<dbReference type="KEGG" id="bse:Bsel_0146"/>
<dbReference type="eggNOG" id="COG0619">
    <property type="taxonomic scope" value="Bacteria"/>
</dbReference>
<dbReference type="HOGENOM" id="CLU_056469_2_2_9"/>
<dbReference type="OrthoDB" id="8075495at2"/>
<dbReference type="Proteomes" id="UP000000271">
    <property type="component" value="Chromosome"/>
</dbReference>
<dbReference type="GO" id="GO:0005886">
    <property type="term" value="C:plasma membrane"/>
    <property type="evidence" value="ECO:0007669"/>
    <property type="project" value="UniProtKB-SubCell"/>
</dbReference>
<dbReference type="GO" id="GO:0022857">
    <property type="term" value="F:transmembrane transporter activity"/>
    <property type="evidence" value="ECO:0007669"/>
    <property type="project" value="UniProtKB-UniRule"/>
</dbReference>
<dbReference type="CDD" id="cd16914">
    <property type="entry name" value="EcfT"/>
    <property type="match status" value="1"/>
</dbReference>
<dbReference type="HAMAP" id="MF_01461">
    <property type="entry name" value="EcfT"/>
    <property type="match status" value="1"/>
</dbReference>
<dbReference type="InterPro" id="IPR003339">
    <property type="entry name" value="ABC/ECF_trnsptr_transmembrane"/>
</dbReference>
<dbReference type="InterPro" id="IPR024919">
    <property type="entry name" value="EcfT"/>
</dbReference>
<dbReference type="PANTHER" id="PTHR33514">
    <property type="entry name" value="PROTEIN ABCI12, CHLOROPLASTIC"/>
    <property type="match status" value="1"/>
</dbReference>
<dbReference type="PANTHER" id="PTHR33514:SF13">
    <property type="entry name" value="PROTEIN ABCI12, CHLOROPLASTIC"/>
    <property type="match status" value="1"/>
</dbReference>
<dbReference type="Pfam" id="PF02361">
    <property type="entry name" value="CbiQ"/>
    <property type="match status" value="1"/>
</dbReference>
<reference key="1">
    <citation type="submission" date="2009-10" db="EMBL/GenBank/DDBJ databases">
        <title>Complete sequence of Bacillus selenitireducens MLS10.</title>
        <authorList>
            <consortium name="US DOE Joint Genome Institute"/>
            <person name="Lucas S."/>
            <person name="Copeland A."/>
            <person name="Lapidus A."/>
            <person name="Glavina del Rio T."/>
            <person name="Dalin E."/>
            <person name="Tice H."/>
            <person name="Bruce D."/>
            <person name="Goodwin L."/>
            <person name="Pitluck S."/>
            <person name="Sims D."/>
            <person name="Brettin T."/>
            <person name="Detter J.C."/>
            <person name="Han C."/>
            <person name="Larimer F."/>
            <person name="Land M."/>
            <person name="Hauser L."/>
            <person name="Kyrpides N."/>
            <person name="Ovchinnikova G."/>
            <person name="Stolz J."/>
        </authorList>
    </citation>
    <scope>NUCLEOTIDE SEQUENCE [LARGE SCALE GENOMIC DNA]</scope>
    <source>
        <strain>ATCC 700615 / DSM 15326 / MLS10</strain>
    </source>
</reference>
<comment type="function">
    <text evidence="1">Transmembrane (T) component of an energy-coupling factor (ECF) ABC-transporter complex. Unlike classic ABC transporters this ECF transporter provides the energy necessary to transport a number of different substrates.</text>
</comment>
<comment type="subunit">
    <text evidence="1">Forms a stable energy-coupling factor (ECF) transporter complex composed of 2 membrane-embedded substrate-binding proteins (S component), 2 ATP-binding proteins (A component) and 2 transmembrane proteins (T component). May be able to interact with more than 1 S component at a time (By similarity).</text>
</comment>
<comment type="subcellular location">
    <subcellularLocation>
        <location evidence="1">Cell membrane</location>
        <topology evidence="1">Multi-pass membrane protein</topology>
    </subcellularLocation>
</comment>
<comment type="similarity">
    <text evidence="1">Belongs to the energy-coupling factor EcfT family.</text>
</comment>
<evidence type="ECO:0000255" key="1">
    <source>
        <dbReference type="HAMAP-Rule" id="MF_01461"/>
    </source>
</evidence>
<protein>
    <recommendedName>
        <fullName evidence="1">Energy-coupling factor transporter transmembrane protein EcfT</fullName>
        <shortName evidence="1">ECF transporter T component EcfT</shortName>
    </recommendedName>
</protein>
<organism>
    <name type="scientific">Bacillus selenitireducens (strain ATCC 700615 / DSM 15326 / MLS10)</name>
    <dbReference type="NCBI Taxonomy" id="439292"/>
    <lineage>
        <taxon>Bacteria</taxon>
        <taxon>Bacillati</taxon>
        <taxon>Bacillota</taxon>
        <taxon>Bacilli</taxon>
        <taxon>Bacillales</taxon>
        <taxon>Bacillaceae</taxon>
        <taxon>Salisediminibacterium</taxon>
    </lineage>
</organism>
<keyword id="KW-1003">Cell membrane</keyword>
<keyword id="KW-0472">Membrane</keyword>
<keyword id="KW-0812">Transmembrane</keyword>
<keyword id="KW-1133">Transmembrane helix</keyword>
<keyword id="KW-0813">Transport</keyword>